<comment type="similarity">
    <text evidence="1">Belongs to the eukaryotic ribosomal protein eS1 family.</text>
</comment>
<name>RS3A_METM5</name>
<organism>
    <name type="scientific">Methanococcus maripaludis (strain C5 / ATCC BAA-1333)</name>
    <dbReference type="NCBI Taxonomy" id="402880"/>
    <lineage>
        <taxon>Archaea</taxon>
        <taxon>Methanobacteriati</taxon>
        <taxon>Methanobacteriota</taxon>
        <taxon>Methanomada group</taxon>
        <taxon>Methanococci</taxon>
        <taxon>Methanococcales</taxon>
        <taxon>Methanococcaceae</taxon>
        <taxon>Methanococcus</taxon>
    </lineage>
</organism>
<dbReference type="EMBL" id="CP000609">
    <property type="protein sequence ID" value="ABO35211.1"/>
    <property type="molecule type" value="Genomic_DNA"/>
</dbReference>
<dbReference type="RefSeq" id="WP_011868665.1">
    <property type="nucleotide sequence ID" value="NC_009135.1"/>
</dbReference>
<dbReference type="SMR" id="A4FYC7"/>
<dbReference type="STRING" id="402880.MmarC5_0905"/>
<dbReference type="GeneID" id="4928871"/>
<dbReference type="KEGG" id="mmq:MmarC5_0905"/>
<dbReference type="eggNOG" id="arCOG04186">
    <property type="taxonomic scope" value="Archaea"/>
</dbReference>
<dbReference type="HOGENOM" id="CLU_062507_1_0_2"/>
<dbReference type="OrthoDB" id="30639at2157"/>
<dbReference type="Proteomes" id="UP000000253">
    <property type="component" value="Chromosome"/>
</dbReference>
<dbReference type="GO" id="GO:1990904">
    <property type="term" value="C:ribonucleoprotein complex"/>
    <property type="evidence" value="ECO:0007669"/>
    <property type="project" value="UniProtKB-KW"/>
</dbReference>
<dbReference type="GO" id="GO:0005840">
    <property type="term" value="C:ribosome"/>
    <property type="evidence" value="ECO:0007669"/>
    <property type="project" value="UniProtKB-KW"/>
</dbReference>
<dbReference type="GO" id="GO:0003735">
    <property type="term" value="F:structural constituent of ribosome"/>
    <property type="evidence" value="ECO:0007669"/>
    <property type="project" value="InterPro"/>
</dbReference>
<dbReference type="GO" id="GO:0006412">
    <property type="term" value="P:translation"/>
    <property type="evidence" value="ECO:0007669"/>
    <property type="project" value="UniProtKB-UniRule"/>
</dbReference>
<dbReference type="HAMAP" id="MF_00359">
    <property type="entry name" value="Ribosomal_eS1"/>
    <property type="match status" value="1"/>
</dbReference>
<dbReference type="InterPro" id="IPR001593">
    <property type="entry name" value="Ribosomal_eS1"/>
</dbReference>
<dbReference type="InterPro" id="IPR030838">
    <property type="entry name" value="Ribosomal_eS1_arc"/>
</dbReference>
<dbReference type="InterPro" id="IPR018281">
    <property type="entry name" value="Ribosomal_eS1_CS"/>
</dbReference>
<dbReference type="NCBIfam" id="NF003142">
    <property type="entry name" value="PRK04057.1"/>
    <property type="match status" value="1"/>
</dbReference>
<dbReference type="Pfam" id="PF01015">
    <property type="entry name" value="Ribosomal_S3Ae"/>
    <property type="match status" value="1"/>
</dbReference>
<dbReference type="SMART" id="SM01397">
    <property type="entry name" value="Ribosomal_S3Ae"/>
    <property type="match status" value="1"/>
</dbReference>
<dbReference type="PROSITE" id="PS01191">
    <property type="entry name" value="RIBOSOMAL_S3AE"/>
    <property type="match status" value="1"/>
</dbReference>
<protein>
    <recommendedName>
        <fullName evidence="1">Small ribosomal subunit protein eS1</fullName>
    </recommendedName>
    <alternativeName>
        <fullName evidence="3">30S ribosomal protein S3Ae</fullName>
    </alternativeName>
    <alternativeName>
        <fullName evidence="1">Ribosomal protein S1e</fullName>
    </alternativeName>
</protein>
<sequence length="225" mass="25381">MARMKARSAKGKRVAKDTWKSKVWYDIYTPQSFGGDVIGQTPANDPATLIGRISEISLRDLTNEHSKHMTRMYFKVDGVSGNNATSQFVGHDTTREYLKSQVRRRRSKINAIVDVRTKDGFKVRVKALVLTAVRARDHHKTEIRINMEQIIRHMAKETAFAEFVHAMLMGGLGSKIYGDCKKMFPLKRVEIFKSEVLEFGKAVEAPVEEPAAEEVAEAPAAETQE</sequence>
<evidence type="ECO:0000255" key="1">
    <source>
        <dbReference type="HAMAP-Rule" id="MF_00359"/>
    </source>
</evidence>
<evidence type="ECO:0000256" key="2">
    <source>
        <dbReference type="SAM" id="MobiDB-lite"/>
    </source>
</evidence>
<evidence type="ECO:0000305" key="3"/>
<keyword id="KW-0687">Ribonucleoprotein</keyword>
<keyword id="KW-0689">Ribosomal protein</keyword>
<gene>
    <name evidence="1" type="primary">rps3ae</name>
    <name type="ordered locus">MmarC5_0905</name>
</gene>
<proteinExistence type="inferred from homology"/>
<reference key="1">
    <citation type="submission" date="2007-03" db="EMBL/GenBank/DDBJ databases">
        <title>Complete sequence of chromosome of Methanococcus maripaludis C5.</title>
        <authorList>
            <consortium name="US DOE Joint Genome Institute"/>
            <person name="Copeland A."/>
            <person name="Lucas S."/>
            <person name="Lapidus A."/>
            <person name="Barry K."/>
            <person name="Glavina del Rio T."/>
            <person name="Dalin E."/>
            <person name="Tice H."/>
            <person name="Pitluck S."/>
            <person name="Chertkov O."/>
            <person name="Brettin T."/>
            <person name="Bruce D."/>
            <person name="Han C."/>
            <person name="Detter J.C."/>
            <person name="Schmutz J."/>
            <person name="Larimer F."/>
            <person name="Land M."/>
            <person name="Hauser L."/>
            <person name="Kyrpides N."/>
            <person name="Mikhailova N."/>
            <person name="Sieprawska-Lupa M."/>
            <person name="Whitman W.B."/>
            <person name="Richardson P."/>
        </authorList>
    </citation>
    <scope>NUCLEOTIDE SEQUENCE [LARGE SCALE GENOMIC DNA]</scope>
    <source>
        <strain>C5 / ATCC BAA-1333</strain>
    </source>
</reference>
<feature type="chain" id="PRO_1000005192" description="Small ribosomal subunit protein eS1">
    <location>
        <begin position="1"/>
        <end position="225"/>
    </location>
</feature>
<feature type="region of interest" description="Disordered" evidence="2">
    <location>
        <begin position="206"/>
        <end position="225"/>
    </location>
</feature>
<feature type="compositionally biased region" description="Acidic residues" evidence="2">
    <location>
        <begin position="206"/>
        <end position="216"/>
    </location>
</feature>
<accession>A4FYC7</accession>